<feature type="chain" id="PRO_0000377156" description="tRNA dimethylallyltransferase">
    <location>
        <begin position="1"/>
        <end position="317"/>
    </location>
</feature>
<feature type="region of interest" description="Interaction with substrate tRNA" evidence="1">
    <location>
        <begin position="49"/>
        <end position="52"/>
    </location>
</feature>
<feature type="binding site" evidence="1">
    <location>
        <begin position="19"/>
        <end position="26"/>
    </location>
    <ligand>
        <name>ATP</name>
        <dbReference type="ChEBI" id="CHEBI:30616"/>
    </ligand>
</feature>
<feature type="binding site" evidence="1">
    <location>
        <begin position="21"/>
        <end position="26"/>
    </location>
    <ligand>
        <name>substrate</name>
    </ligand>
</feature>
<feature type="site" description="Interaction with substrate tRNA" evidence="1">
    <location>
        <position position="115"/>
    </location>
</feature>
<feature type="site" description="Interaction with substrate tRNA" evidence="1">
    <location>
        <position position="137"/>
    </location>
</feature>
<name>MIAA_ERYLH</name>
<protein>
    <recommendedName>
        <fullName evidence="1">tRNA dimethylallyltransferase</fullName>
        <ecNumber evidence="1">2.5.1.75</ecNumber>
    </recommendedName>
    <alternativeName>
        <fullName evidence="1">Dimethylallyl diphosphate:tRNA dimethylallyltransferase</fullName>
        <shortName evidence="1">DMAPP:tRNA dimethylallyltransferase</shortName>
        <shortName evidence="1">DMATase</shortName>
    </alternativeName>
    <alternativeName>
        <fullName evidence="1">Isopentenyl-diphosphate:tRNA isopentenyltransferase</fullName>
        <shortName evidence="1">IPP transferase</shortName>
        <shortName evidence="1">IPPT</shortName>
        <shortName evidence="1">IPTase</shortName>
    </alternativeName>
</protein>
<sequence>MGQTPEDWGEKPPVALIAGPTASGKSDVAVRLALALKKHGRDAVVINADSAQVYADLRVLSARPSEDEMRGVPHELFGEWDGAEACSAAEWASRAKEEISKAHFTGAVPILVGGTGLYLRTLLEGIAPIPPIDAAIREAIRALPQDEARAALEREDPDASKRLAPADAARTARALEVVRSTGRTLSNWQQHKKGGIGDRVALHPLIMLPDRKWLYARCDRRFELMLDRGAASEVETLLARDLDPSLPVMRAIGVREIAAWLKGEIDRPQMIASGQQATRNYAKRQYTWFRHQPPPDWPRIETFDFKLERVFDGLFQY</sequence>
<accession>Q2NAU5</accession>
<comment type="function">
    <text evidence="1">Catalyzes the transfer of a dimethylallyl group onto the adenine at position 37 in tRNAs that read codons beginning with uridine, leading to the formation of N6-(dimethylallyl)adenosine (i(6)A).</text>
</comment>
<comment type="catalytic activity">
    <reaction evidence="1">
        <text>adenosine(37) in tRNA + dimethylallyl diphosphate = N(6)-dimethylallyladenosine(37) in tRNA + diphosphate</text>
        <dbReference type="Rhea" id="RHEA:26482"/>
        <dbReference type="Rhea" id="RHEA-COMP:10162"/>
        <dbReference type="Rhea" id="RHEA-COMP:10375"/>
        <dbReference type="ChEBI" id="CHEBI:33019"/>
        <dbReference type="ChEBI" id="CHEBI:57623"/>
        <dbReference type="ChEBI" id="CHEBI:74411"/>
        <dbReference type="ChEBI" id="CHEBI:74415"/>
        <dbReference type="EC" id="2.5.1.75"/>
    </reaction>
</comment>
<comment type="cofactor">
    <cofactor evidence="1">
        <name>Mg(2+)</name>
        <dbReference type="ChEBI" id="CHEBI:18420"/>
    </cofactor>
</comment>
<comment type="subunit">
    <text evidence="1">Monomer.</text>
</comment>
<comment type="similarity">
    <text evidence="1">Belongs to the IPP transferase family.</text>
</comment>
<dbReference type="EC" id="2.5.1.75" evidence="1"/>
<dbReference type="EMBL" id="CP000157">
    <property type="protein sequence ID" value="ABC63196.1"/>
    <property type="molecule type" value="Genomic_DNA"/>
</dbReference>
<dbReference type="RefSeq" id="WP_011414032.1">
    <property type="nucleotide sequence ID" value="NC_007722.1"/>
</dbReference>
<dbReference type="SMR" id="Q2NAU5"/>
<dbReference type="STRING" id="314225.ELI_05520"/>
<dbReference type="KEGG" id="eli:ELI_05520"/>
<dbReference type="eggNOG" id="COG0324">
    <property type="taxonomic scope" value="Bacteria"/>
</dbReference>
<dbReference type="HOGENOM" id="CLU_032616_0_1_5"/>
<dbReference type="Proteomes" id="UP000008808">
    <property type="component" value="Chromosome"/>
</dbReference>
<dbReference type="GO" id="GO:0005524">
    <property type="term" value="F:ATP binding"/>
    <property type="evidence" value="ECO:0007669"/>
    <property type="project" value="UniProtKB-UniRule"/>
</dbReference>
<dbReference type="GO" id="GO:0052381">
    <property type="term" value="F:tRNA dimethylallyltransferase activity"/>
    <property type="evidence" value="ECO:0007669"/>
    <property type="project" value="UniProtKB-UniRule"/>
</dbReference>
<dbReference type="GO" id="GO:0006400">
    <property type="term" value="P:tRNA modification"/>
    <property type="evidence" value="ECO:0007669"/>
    <property type="project" value="TreeGrafter"/>
</dbReference>
<dbReference type="Gene3D" id="1.10.20.140">
    <property type="match status" value="1"/>
</dbReference>
<dbReference type="Gene3D" id="3.40.50.300">
    <property type="entry name" value="P-loop containing nucleotide triphosphate hydrolases"/>
    <property type="match status" value="1"/>
</dbReference>
<dbReference type="HAMAP" id="MF_00185">
    <property type="entry name" value="IPP_trans"/>
    <property type="match status" value="1"/>
</dbReference>
<dbReference type="InterPro" id="IPR039657">
    <property type="entry name" value="Dimethylallyltransferase"/>
</dbReference>
<dbReference type="InterPro" id="IPR018022">
    <property type="entry name" value="IPT"/>
</dbReference>
<dbReference type="InterPro" id="IPR027417">
    <property type="entry name" value="P-loop_NTPase"/>
</dbReference>
<dbReference type="NCBIfam" id="TIGR00174">
    <property type="entry name" value="miaA"/>
    <property type="match status" value="1"/>
</dbReference>
<dbReference type="PANTHER" id="PTHR11088">
    <property type="entry name" value="TRNA DIMETHYLALLYLTRANSFERASE"/>
    <property type="match status" value="1"/>
</dbReference>
<dbReference type="PANTHER" id="PTHR11088:SF60">
    <property type="entry name" value="TRNA DIMETHYLALLYLTRANSFERASE"/>
    <property type="match status" value="1"/>
</dbReference>
<dbReference type="Pfam" id="PF01715">
    <property type="entry name" value="IPPT"/>
    <property type="match status" value="1"/>
</dbReference>
<dbReference type="SUPFAM" id="SSF52540">
    <property type="entry name" value="P-loop containing nucleoside triphosphate hydrolases"/>
    <property type="match status" value="1"/>
</dbReference>
<proteinExistence type="inferred from homology"/>
<reference key="1">
    <citation type="journal article" date="2009" name="J. Bacteriol.">
        <title>Complete genome sequence of Erythrobacter litoralis HTCC2594.</title>
        <authorList>
            <person name="Oh H.M."/>
            <person name="Giovannoni S.J."/>
            <person name="Ferriera S."/>
            <person name="Johnson J."/>
            <person name="Cho J.C."/>
        </authorList>
    </citation>
    <scope>NUCLEOTIDE SEQUENCE [LARGE SCALE GENOMIC DNA]</scope>
    <source>
        <strain>HTCC2594</strain>
    </source>
</reference>
<gene>
    <name evidence="1" type="primary">miaA</name>
    <name type="ordered locus">ELI_05520</name>
</gene>
<organism>
    <name type="scientific">Erythrobacter litoralis (strain HTCC2594)</name>
    <dbReference type="NCBI Taxonomy" id="314225"/>
    <lineage>
        <taxon>Bacteria</taxon>
        <taxon>Pseudomonadati</taxon>
        <taxon>Pseudomonadota</taxon>
        <taxon>Alphaproteobacteria</taxon>
        <taxon>Sphingomonadales</taxon>
        <taxon>Erythrobacteraceae</taxon>
        <taxon>Erythrobacter/Porphyrobacter group</taxon>
        <taxon>Erythrobacter</taxon>
    </lineage>
</organism>
<evidence type="ECO:0000255" key="1">
    <source>
        <dbReference type="HAMAP-Rule" id="MF_00185"/>
    </source>
</evidence>
<keyword id="KW-0067">ATP-binding</keyword>
<keyword id="KW-0460">Magnesium</keyword>
<keyword id="KW-0547">Nucleotide-binding</keyword>
<keyword id="KW-1185">Reference proteome</keyword>
<keyword id="KW-0808">Transferase</keyword>
<keyword id="KW-0819">tRNA processing</keyword>